<dbReference type="EC" id="5.1.1.3" evidence="1"/>
<dbReference type="EMBL" id="CP000411">
    <property type="protein sequence ID" value="ABJ56617.1"/>
    <property type="molecule type" value="Genomic_DNA"/>
</dbReference>
<dbReference type="RefSeq" id="WP_002820139.1">
    <property type="nucleotide sequence ID" value="NC_008528.1"/>
</dbReference>
<dbReference type="SMR" id="Q04G05"/>
<dbReference type="STRING" id="203123.OEOE_0680"/>
<dbReference type="GeneID" id="75066243"/>
<dbReference type="KEGG" id="ooe:OEOE_0680"/>
<dbReference type="eggNOG" id="COG0796">
    <property type="taxonomic scope" value="Bacteria"/>
</dbReference>
<dbReference type="HOGENOM" id="CLU_052344_0_1_9"/>
<dbReference type="UniPathway" id="UPA00219"/>
<dbReference type="Proteomes" id="UP000000774">
    <property type="component" value="Chromosome"/>
</dbReference>
<dbReference type="GO" id="GO:0008881">
    <property type="term" value="F:glutamate racemase activity"/>
    <property type="evidence" value="ECO:0007669"/>
    <property type="project" value="UniProtKB-UniRule"/>
</dbReference>
<dbReference type="GO" id="GO:0071555">
    <property type="term" value="P:cell wall organization"/>
    <property type="evidence" value="ECO:0007669"/>
    <property type="project" value="UniProtKB-KW"/>
</dbReference>
<dbReference type="GO" id="GO:0009252">
    <property type="term" value="P:peptidoglycan biosynthetic process"/>
    <property type="evidence" value="ECO:0007669"/>
    <property type="project" value="UniProtKB-UniRule"/>
</dbReference>
<dbReference type="GO" id="GO:0008360">
    <property type="term" value="P:regulation of cell shape"/>
    <property type="evidence" value="ECO:0007669"/>
    <property type="project" value="UniProtKB-KW"/>
</dbReference>
<dbReference type="FunFam" id="3.40.50.1860:FF:000001">
    <property type="entry name" value="Glutamate racemase"/>
    <property type="match status" value="1"/>
</dbReference>
<dbReference type="FunFam" id="3.40.50.1860:FF:000002">
    <property type="entry name" value="Glutamate racemase"/>
    <property type="match status" value="1"/>
</dbReference>
<dbReference type="Gene3D" id="3.40.50.1860">
    <property type="match status" value="2"/>
</dbReference>
<dbReference type="HAMAP" id="MF_00258">
    <property type="entry name" value="Glu_racemase"/>
    <property type="match status" value="1"/>
</dbReference>
<dbReference type="InterPro" id="IPR015942">
    <property type="entry name" value="Asp/Glu/hydantoin_racemase"/>
</dbReference>
<dbReference type="InterPro" id="IPR001920">
    <property type="entry name" value="Asp/Glu_race"/>
</dbReference>
<dbReference type="InterPro" id="IPR018187">
    <property type="entry name" value="Asp/Glu_racemase_AS_1"/>
</dbReference>
<dbReference type="InterPro" id="IPR033134">
    <property type="entry name" value="Asp/Glu_racemase_AS_2"/>
</dbReference>
<dbReference type="InterPro" id="IPR004391">
    <property type="entry name" value="Glu_race"/>
</dbReference>
<dbReference type="NCBIfam" id="TIGR00067">
    <property type="entry name" value="glut_race"/>
    <property type="match status" value="1"/>
</dbReference>
<dbReference type="PANTHER" id="PTHR21198">
    <property type="entry name" value="GLUTAMATE RACEMASE"/>
    <property type="match status" value="1"/>
</dbReference>
<dbReference type="PANTHER" id="PTHR21198:SF2">
    <property type="entry name" value="GLUTAMATE RACEMASE"/>
    <property type="match status" value="1"/>
</dbReference>
<dbReference type="Pfam" id="PF01177">
    <property type="entry name" value="Asp_Glu_race"/>
    <property type="match status" value="1"/>
</dbReference>
<dbReference type="SUPFAM" id="SSF53681">
    <property type="entry name" value="Aspartate/glutamate racemase"/>
    <property type="match status" value="2"/>
</dbReference>
<dbReference type="PROSITE" id="PS00923">
    <property type="entry name" value="ASP_GLU_RACEMASE_1"/>
    <property type="match status" value="1"/>
</dbReference>
<dbReference type="PROSITE" id="PS00924">
    <property type="entry name" value="ASP_GLU_RACEMASE_2"/>
    <property type="match status" value="1"/>
</dbReference>
<proteinExistence type="inferred from homology"/>
<organism>
    <name type="scientific">Oenococcus oeni (strain ATCC BAA-331 / PSU-1)</name>
    <dbReference type="NCBI Taxonomy" id="203123"/>
    <lineage>
        <taxon>Bacteria</taxon>
        <taxon>Bacillati</taxon>
        <taxon>Bacillota</taxon>
        <taxon>Bacilli</taxon>
        <taxon>Lactobacillales</taxon>
        <taxon>Lactobacillaceae</taxon>
        <taxon>Oenococcus</taxon>
    </lineage>
</organism>
<evidence type="ECO:0000255" key="1">
    <source>
        <dbReference type="HAMAP-Rule" id="MF_00258"/>
    </source>
</evidence>
<protein>
    <recommendedName>
        <fullName evidence="1">Glutamate racemase</fullName>
        <ecNumber evidence="1">5.1.1.3</ecNumber>
    </recommendedName>
</protein>
<comment type="function">
    <text evidence="1">Provides the (R)-glutamate required for cell wall biosynthesis.</text>
</comment>
<comment type="catalytic activity">
    <reaction evidence="1">
        <text>L-glutamate = D-glutamate</text>
        <dbReference type="Rhea" id="RHEA:12813"/>
        <dbReference type="ChEBI" id="CHEBI:29985"/>
        <dbReference type="ChEBI" id="CHEBI:29986"/>
        <dbReference type="EC" id="5.1.1.3"/>
    </reaction>
</comment>
<comment type="pathway">
    <text evidence="1">Cell wall biogenesis; peptidoglycan biosynthesis.</text>
</comment>
<comment type="similarity">
    <text evidence="1">Belongs to the aspartate/glutamate racemases family.</text>
</comment>
<keyword id="KW-0133">Cell shape</keyword>
<keyword id="KW-0961">Cell wall biogenesis/degradation</keyword>
<keyword id="KW-0413">Isomerase</keyword>
<keyword id="KW-0573">Peptidoglycan synthesis</keyword>
<keyword id="KW-1185">Reference proteome</keyword>
<gene>
    <name evidence="1" type="primary">murI</name>
    <name type="ordered locus">OEOE_0680</name>
</gene>
<accession>Q04G05</accession>
<sequence length="281" mass="31229">MDNRGIGYIDSGLGGLTVVREALKQLPNESVYFVGDEARMPYGPRPTVEIQKFTLQMADFLVKKHNIKALVVACNTATAQALPQLRAYLEIPVIGVISAGALAGINATRNLHVNVIGTQSTVESKAYYDQLIALNSDLVIEQKALPEFVQLVESDMAGTPKGKQIVYQAIHNWMEEKNDGKKSDTLVLGCTHFPILKKEIQAAVDKNVAVVDPASEEILQTAEIMRKNNAFHDSKNINHHEKDVFYTTGNIGRFSKFTREWLNKSNLTIKELHIDQKGLKE</sequence>
<feature type="chain" id="PRO_1000047593" description="Glutamate racemase">
    <location>
        <begin position="1"/>
        <end position="281"/>
    </location>
</feature>
<feature type="active site" description="Proton donor/acceptor" evidence="1">
    <location>
        <position position="74"/>
    </location>
</feature>
<feature type="active site" description="Proton donor/acceptor" evidence="1">
    <location>
        <position position="190"/>
    </location>
</feature>
<feature type="binding site" evidence="1">
    <location>
        <begin position="10"/>
        <end position="11"/>
    </location>
    <ligand>
        <name>substrate</name>
    </ligand>
</feature>
<feature type="binding site" evidence="1">
    <location>
        <begin position="42"/>
        <end position="43"/>
    </location>
    <ligand>
        <name>substrate</name>
    </ligand>
</feature>
<feature type="binding site" evidence="1">
    <location>
        <begin position="75"/>
        <end position="76"/>
    </location>
    <ligand>
        <name>substrate</name>
    </ligand>
</feature>
<feature type="binding site" evidence="1">
    <location>
        <begin position="191"/>
        <end position="192"/>
    </location>
    <ligand>
        <name>substrate</name>
    </ligand>
</feature>
<reference key="1">
    <citation type="journal article" date="2006" name="Proc. Natl. Acad. Sci. U.S.A.">
        <title>Comparative genomics of the lactic acid bacteria.</title>
        <authorList>
            <person name="Makarova K.S."/>
            <person name="Slesarev A."/>
            <person name="Wolf Y.I."/>
            <person name="Sorokin A."/>
            <person name="Mirkin B."/>
            <person name="Koonin E.V."/>
            <person name="Pavlov A."/>
            <person name="Pavlova N."/>
            <person name="Karamychev V."/>
            <person name="Polouchine N."/>
            <person name="Shakhova V."/>
            <person name="Grigoriev I."/>
            <person name="Lou Y."/>
            <person name="Rohksar D."/>
            <person name="Lucas S."/>
            <person name="Huang K."/>
            <person name="Goodstein D.M."/>
            <person name="Hawkins T."/>
            <person name="Plengvidhya V."/>
            <person name="Welker D."/>
            <person name="Hughes J."/>
            <person name="Goh Y."/>
            <person name="Benson A."/>
            <person name="Baldwin K."/>
            <person name="Lee J.-H."/>
            <person name="Diaz-Muniz I."/>
            <person name="Dosti B."/>
            <person name="Smeianov V."/>
            <person name="Wechter W."/>
            <person name="Barabote R."/>
            <person name="Lorca G."/>
            <person name="Altermann E."/>
            <person name="Barrangou R."/>
            <person name="Ganesan B."/>
            <person name="Xie Y."/>
            <person name="Rawsthorne H."/>
            <person name="Tamir D."/>
            <person name="Parker C."/>
            <person name="Breidt F."/>
            <person name="Broadbent J.R."/>
            <person name="Hutkins R."/>
            <person name="O'Sullivan D."/>
            <person name="Steele J."/>
            <person name="Unlu G."/>
            <person name="Saier M.H. Jr."/>
            <person name="Klaenhammer T."/>
            <person name="Richardson P."/>
            <person name="Kozyavkin S."/>
            <person name="Weimer B.C."/>
            <person name="Mills D.A."/>
        </authorList>
    </citation>
    <scope>NUCLEOTIDE SEQUENCE [LARGE SCALE GENOMIC DNA]</scope>
    <source>
        <strain>ATCC BAA-331 / PSU-1</strain>
    </source>
</reference>
<name>MURI_OENOB</name>